<reference key="1">
    <citation type="submission" date="2008-10" db="EMBL/GenBank/DDBJ databases">
        <title>Genome sequence of Bacillus cereus B4264.</title>
        <authorList>
            <person name="Dodson R.J."/>
            <person name="Durkin A.S."/>
            <person name="Rosovitz M.J."/>
            <person name="Rasko D.A."/>
            <person name="Hoffmaster A."/>
            <person name="Ravel J."/>
            <person name="Sutton G."/>
        </authorList>
    </citation>
    <scope>NUCLEOTIDE SEQUENCE [LARGE SCALE GENOMIC DNA]</scope>
    <source>
        <strain>B4264</strain>
    </source>
</reference>
<feature type="chain" id="PRO_1000190506" description="Glutamyl-tRNA reductase">
    <location>
        <begin position="1"/>
        <end position="444"/>
    </location>
</feature>
<feature type="active site" description="Nucleophile" evidence="1">
    <location>
        <position position="50"/>
    </location>
</feature>
<feature type="binding site" evidence="1">
    <location>
        <begin position="49"/>
        <end position="52"/>
    </location>
    <ligand>
        <name>substrate</name>
    </ligand>
</feature>
<feature type="binding site" evidence="1">
    <location>
        <position position="109"/>
    </location>
    <ligand>
        <name>substrate</name>
    </ligand>
</feature>
<feature type="binding site" evidence="1">
    <location>
        <begin position="114"/>
        <end position="116"/>
    </location>
    <ligand>
        <name>substrate</name>
    </ligand>
</feature>
<feature type="binding site" evidence="1">
    <location>
        <position position="120"/>
    </location>
    <ligand>
        <name>substrate</name>
    </ligand>
</feature>
<feature type="binding site" evidence="1">
    <location>
        <begin position="189"/>
        <end position="194"/>
    </location>
    <ligand>
        <name>NADP(+)</name>
        <dbReference type="ChEBI" id="CHEBI:58349"/>
    </ligand>
</feature>
<feature type="site" description="Important for activity" evidence="1">
    <location>
        <position position="99"/>
    </location>
</feature>
<evidence type="ECO:0000255" key="1">
    <source>
        <dbReference type="HAMAP-Rule" id="MF_00087"/>
    </source>
</evidence>
<keyword id="KW-0521">NADP</keyword>
<keyword id="KW-0560">Oxidoreductase</keyword>
<keyword id="KW-0627">Porphyrin biosynthesis</keyword>
<organism>
    <name type="scientific">Bacillus cereus (strain B4264)</name>
    <dbReference type="NCBI Taxonomy" id="405532"/>
    <lineage>
        <taxon>Bacteria</taxon>
        <taxon>Bacillati</taxon>
        <taxon>Bacillota</taxon>
        <taxon>Bacilli</taxon>
        <taxon>Bacillales</taxon>
        <taxon>Bacillaceae</taxon>
        <taxon>Bacillus</taxon>
        <taxon>Bacillus cereus group</taxon>
    </lineage>
</organism>
<accession>B7HE98</accession>
<dbReference type="EC" id="1.2.1.70" evidence="1"/>
<dbReference type="EMBL" id="CP001176">
    <property type="protein sequence ID" value="ACK59682.1"/>
    <property type="molecule type" value="Genomic_DNA"/>
</dbReference>
<dbReference type="RefSeq" id="WP_000547868.1">
    <property type="nucleotide sequence ID" value="NZ_VEHB01000006.1"/>
</dbReference>
<dbReference type="SMR" id="B7HE98"/>
<dbReference type="KEGG" id="bcb:BCB4264_A4584"/>
<dbReference type="HOGENOM" id="CLU_035113_2_2_9"/>
<dbReference type="UniPathway" id="UPA00251">
    <property type="reaction ID" value="UER00316"/>
</dbReference>
<dbReference type="Proteomes" id="UP000007096">
    <property type="component" value="Chromosome"/>
</dbReference>
<dbReference type="GO" id="GO:0008883">
    <property type="term" value="F:glutamyl-tRNA reductase activity"/>
    <property type="evidence" value="ECO:0007669"/>
    <property type="project" value="UniProtKB-UniRule"/>
</dbReference>
<dbReference type="GO" id="GO:0050661">
    <property type="term" value="F:NADP binding"/>
    <property type="evidence" value="ECO:0007669"/>
    <property type="project" value="InterPro"/>
</dbReference>
<dbReference type="GO" id="GO:0006782">
    <property type="term" value="P:protoporphyrinogen IX biosynthetic process"/>
    <property type="evidence" value="ECO:0007669"/>
    <property type="project" value="UniProtKB-UniRule"/>
</dbReference>
<dbReference type="CDD" id="cd05213">
    <property type="entry name" value="NAD_bind_Glutamyl_tRNA_reduct"/>
    <property type="match status" value="1"/>
</dbReference>
<dbReference type="FunFam" id="3.30.460.30:FF:000001">
    <property type="entry name" value="Glutamyl-tRNA reductase"/>
    <property type="match status" value="1"/>
</dbReference>
<dbReference type="FunFam" id="3.40.50.720:FF:000031">
    <property type="entry name" value="Glutamyl-tRNA reductase"/>
    <property type="match status" value="1"/>
</dbReference>
<dbReference type="Gene3D" id="3.30.460.30">
    <property type="entry name" value="Glutamyl-tRNA reductase, N-terminal domain"/>
    <property type="match status" value="1"/>
</dbReference>
<dbReference type="Gene3D" id="3.40.50.720">
    <property type="entry name" value="NAD(P)-binding Rossmann-like Domain"/>
    <property type="match status" value="1"/>
</dbReference>
<dbReference type="HAMAP" id="MF_00087">
    <property type="entry name" value="Glu_tRNA_reductase"/>
    <property type="match status" value="1"/>
</dbReference>
<dbReference type="InterPro" id="IPR000343">
    <property type="entry name" value="4pyrrol_synth_GluRdtase"/>
</dbReference>
<dbReference type="InterPro" id="IPR015896">
    <property type="entry name" value="4pyrrol_synth_GluRdtase_dimer"/>
</dbReference>
<dbReference type="InterPro" id="IPR015895">
    <property type="entry name" value="4pyrrol_synth_GluRdtase_N"/>
</dbReference>
<dbReference type="InterPro" id="IPR018214">
    <property type="entry name" value="GluRdtase_CS"/>
</dbReference>
<dbReference type="InterPro" id="IPR036453">
    <property type="entry name" value="GluRdtase_dimer_dom_sf"/>
</dbReference>
<dbReference type="InterPro" id="IPR036343">
    <property type="entry name" value="GluRdtase_N_sf"/>
</dbReference>
<dbReference type="InterPro" id="IPR036291">
    <property type="entry name" value="NAD(P)-bd_dom_sf"/>
</dbReference>
<dbReference type="InterPro" id="IPR006151">
    <property type="entry name" value="Shikm_DH/Glu-tRNA_Rdtase"/>
</dbReference>
<dbReference type="NCBIfam" id="TIGR01035">
    <property type="entry name" value="hemA"/>
    <property type="match status" value="1"/>
</dbReference>
<dbReference type="PANTHER" id="PTHR43120">
    <property type="entry name" value="GLUTAMYL-TRNA REDUCTASE 1, CHLOROPLASTIC"/>
    <property type="match status" value="1"/>
</dbReference>
<dbReference type="PANTHER" id="PTHR43120:SF1">
    <property type="entry name" value="GLUTAMYL-TRNA REDUCTASE 1, CHLOROPLASTIC"/>
    <property type="match status" value="1"/>
</dbReference>
<dbReference type="Pfam" id="PF00745">
    <property type="entry name" value="GlutR_dimer"/>
    <property type="match status" value="1"/>
</dbReference>
<dbReference type="Pfam" id="PF05201">
    <property type="entry name" value="GlutR_N"/>
    <property type="match status" value="1"/>
</dbReference>
<dbReference type="Pfam" id="PF01488">
    <property type="entry name" value="Shikimate_DH"/>
    <property type="match status" value="1"/>
</dbReference>
<dbReference type="PIRSF" id="PIRSF000445">
    <property type="entry name" value="4pyrrol_synth_GluRdtase"/>
    <property type="match status" value="1"/>
</dbReference>
<dbReference type="SUPFAM" id="SSF69742">
    <property type="entry name" value="Glutamyl tRNA-reductase catalytic, N-terminal domain"/>
    <property type="match status" value="1"/>
</dbReference>
<dbReference type="SUPFAM" id="SSF69075">
    <property type="entry name" value="Glutamyl tRNA-reductase dimerization domain"/>
    <property type="match status" value="1"/>
</dbReference>
<dbReference type="SUPFAM" id="SSF51735">
    <property type="entry name" value="NAD(P)-binding Rossmann-fold domains"/>
    <property type="match status" value="1"/>
</dbReference>
<dbReference type="PROSITE" id="PS00747">
    <property type="entry name" value="GLUTR"/>
    <property type="match status" value="1"/>
</dbReference>
<comment type="function">
    <text evidence="1">Catalyzes the NADPH-dependent reduction of glutamyl-tRNA(Glu) to glutamate 1-semialdehyde (GSA).</text>
</comment>
<comment type="catalytic activity">
    <reaction evidence="1">
        <text>(S)-4-amino-5-oxopentanoate + tRNA(Glu) + NADP(+) = L-glutamyl-tRNA(Glu) + NADPH + H(+)</text>
        <dbReference type="Rhea" id="RHEA:12344"/>
        <dbReference type="Rhea" id="RHEA-COMP:9663"/>
        <dbReference type="Rhea" id="RHEA-COMP:9680"/>
        <dbReference type="ChEBI" id="CHEBI:15378"/>
        <dbReference type="ChEBI" id="CHEBI:57501"/>
        <dbReference type="ChEBI" id="CHEBI:57783"/>
        <dbReference type="ChEBI" id="CHEBI:58349"/>
        <dbReference type="ChEBI" id="CHEBI:78442"/>
        <dbReference type="ChEBI" id="CHEBI:78520"/>
        <dbReference type="EC" id="1.2.1.70"/>
    </reaction>
</comment>
<comment type="pathway">
    <text evidence="1">Porphyrin-containing compound metabolism; protoporphyrin-IX biosynthesis; 5-aminolevulinate from L-glutamyl-tRNA(Glu): step 1/2.</text>
</comment>
<comment type="subunit">
    <text evidence="1">Homodimer.</text>
</comment>
<comment type="domain">
    <text evidence="1">Possesses an unusual extended V-shaped dimeric structure with each monomer consisting of three distinct domains arranged along a curved 'spinal' alpha-helix. The N-terminal catalytic domain specifically recognizes the glutamate moiety of the substrate. The second domain is the NADPH-binding domain, and the third C-terminal domain is responsible for dimerization.</text>
</comment>
<comment type="miscellaneous">
    <text evidence="1">During catalysis, the active site Cys acts as a nucleophile attacking the alpha-carbonyl group of tRNA-bound glutamate with the formation of a thioester intermediate between enzyme and glutamate, and the concomitant release of tRNA(Glu). The thioester intermediate is finally reduced by direct hydride transfer from NADPH, to form the product GSA.</text>
</comment>
<comment type="similarity">
    <text evidence="1">Belongs to the glutamyl-tRNA reductase family.</text>
</comment>
<protein>
    <recommendedName>
        <fullName evidence="1">Glutamyl-tRNA reductase</fullName>
        <shortName evidence="1">GluTR</shortName>
        <ecNumber evidence="1">1.2.1.70</ecNumber>
    </recommendedName>
</protein>
<sequence>MHILVVSVNYRTAPVEFREKLTFQAAELERAMTTLQNQKSVLENVIVSTCNRTEIYAVVDQLHTGRYYIKKFLADWFQLEIEEVAPYLTIFEQDGAIDHLFRVTCGLDSMVVGETQILGQIKDSFLEAQQVKATGTIFNELFKQVITLAKRAHSETTIGESAMSVSYAAVELGKKIFGELTDCHVLILGAGKMGELALQNLYGSGARKVTVMNRTLSKAEVMAEKYMGHAKSLSELQCALLEADILISSTGASEYVITKEMMTKVEKMRSGRPLFMVDIAVPRDIDPAIDELEGSFLYDIDDLQGVVEANRAERLKEAEKIQFMIEEEIVLFKTWLSTLGVVPLISALRDKALAIQSETMVSLERKIPNLSDREKKVISKHTKSIINQLLKDPILVAKEIAAEEGASEKLALFAKIFDLETEEVESRAEEVEHKRVWTPSVPSL</sequence>
<proteinExistence type="inferred from homology"/>
<gene>
    <name evidence="1" type="primary">hemA</name>
    <name type="ordered locus">BCB4264_A4584</name>
</gene>
<name>HEM1_BACC4</name>